<keyword id="KW-0539">Nucleus</keyword>
<keyword id="KW-1185">Reference proteome</keyword>
<keyword id="KW-0690">Ribosome biogenesis</keyword>
<keyword id="KW-0698">rRNA processing</keyword>
<name>PXR1_ASPOR</name>
<comment type="function">
    <text evidence="1">Involved in rRNA-processing at A0, A1 and A2 sites and negatively regulates telomerase.</text>
</comment>
<comment type="subcellular location">
    <subcellularLocation>
        <location evidence="1">Nucleus</location>
        <location evidence="1">Nucleolus</location>
    </subcellularLocation>
</comment>
<comment type="similarity">
    <text evidence="4">Belongs to the PINX1 family.</text>
</comment>
<dbReference type="EMBL" id="AP007160">
    <property type="protein sequence ID" value="BAE60248.1"/>
    <property type="molecule type" value="Genomic_DNA"/>
</dbReference>
<dbReference type="SMR" id="Q2UDW7"/>
<dbReference type="STRING" id="510516.Q2UDW7"/>
<dbReference type="EnsemblFungi" id="BAE60248">
    <property type="protein sequence ID" value="BAE60248"/>
    <property type="gene ID" value="AO090673000008"/>
</dbReference>
<dbReference type="VEuPathDB" id="FungiDB:AO090673000008"/>
<dbReference type="HOGENOM" id="CLU_052839_0_0_1"/>
<dbReference type="OMA" id="ATKWHTV"/>
<dbReference type="Proteomes" id="UP000006564">
    <property type="component" value="Unplaced 47Q_0173"/>
</dbReference>
<dbReference type="GO" id="GO:0005730">
    <property type="term" value="C:nucleolus"/>
    <property type="evidence" value="ECO:0007669"/>
    <property type="project" value="UniProtKB-SubCell"/>
</dbReference>
<dbReference type="GO" id="GO:0003676">
    <property type="term" value="F:nucleic acid binding"/>
    <property type="evidence" value="ECO:0007669"/>
    <property type="project" value="InterPro"/>
</dbReference>
<dbReference type="GO" id="GO:0006364">
    <property type="term" value="P:rRNA processing"/>
    <property type="evidence" value="ECO:0007669"/>
    <property type="project" value="UniProtKB-KW"/>
</dbReference>
<dbReference type="InterPro" id="IPR000467">
    <property type="entry name" value="G_patch_dom"/>
</dbReference>
<dbReference type="InterPro" id="IPR050656">
    <property type="entry name" value="PINX1"/>
</dbReference>
<dbReference type="PANTHER" id="PTHR23149">
    <property type="entry name" value="G PATCH DOMAIN CONTAINING PROTEIN"/>
    <property type="match status" value="1"/>
</dbReference>
<dbReference type="PANTHER" id="PTHR23149:SF31">
    <property type="entry name" value="PROTEIN PXR1"/>
    <property type="match status" value="1"/>
</dbReference>
<dbReference type="PROSITE" id="PS50174">
    <property type="entry name" value="G_PATCH"/>
    <property type="match status" value="1"/>
</dbReference>
<evidence type="ECO:0000250" key="1"/>
<evidence type="ECO:0000255" key="2">
    <source>
        <dbReference type="PROSITE-ProRule" id="PRU00092"/>
    </source>
</evidence>
<evidence type="ECO:0000256" key="3">
    <source>
        <dbReference type="SAM" id="MobiDB-lite"/>
    </source>
</evidence>
<evidence type="ECO:0000305" key="4"/>
<reference key="1">
    <citation type="journal article" date="2005" name="Nature">
        <title>Genome sequencing and analysis of Aspergillus oryzae.</title>
        <authorList>
            <person name="Machida M."/>
            <person name="Asai K."/>
            <person name="Sano M."/>
            <person name="Tanaka T."/>
            <person name="Kumagai T."/>
            <person name="Terai G."/>
            <person name="Kusumoto K."/>
            <person name="Arima T."/>
            <person name="Akita O."/>
            <person name="Kashiwagi Y."/>
            <person name="Abe K."/>
            <person name="Gomi K."/>
            <person name="Horiuchi H."/>
            <person name="Kitamoto K."/>
            <person name="Kobayashi T."/>
            <person name="Takeuchi M."/>
            <person name="Denning D.W."/>
            <person name="Galagan J.E."/>
            <person name="Nierman W.C."/>
            <person name="Yu J."/>
            <person name="Archer D.B."/>
            <person name="Bennett J.W."/>
            <person name="Bhatnagar D."/>
            <person name="Cleveland T.E."/>
            <person name="Fedorova N.D."/>
            <person name="Gotoh O."/>
            <person name="Horikawa H."/>
            <person name="Hosoyama A."/>
            <person name="Ichinomiya M."/>
            <person name="Igarashi R."/>
            <person name="Iwashita K."/>
            <person name="Juvvadi P.R."/>
            <person name="Kato M."/>
            <person name="Kato Y."/>
            <person name="Kin T."/>
            <person name="Kokubun A."/>
            <person name="Maeda H."/>
            <person name="Maeyama N."/>
            <person name="Maruyama J."/>
            <person name="Nagasaki H."/>
            <person name="Nakajima T."/>
            <person name="Oda K."/>
            <person name="Okada K."/>
            <person name="Paulsen I."/>
            <person name="Sakamoto K."/>
            <person name="Sawano T."/>
            <person name="Takahashi M."/>
            <person name="Takase K."/>
            <person name="Terabayashi Y."/>
            <person name="Wortman J.R."/>
            <person name="Yamada O."/>
            <person name="Yamagata Y."/>
            <person name="Anazawa H."/>
            <person name="Hata Y."/>
            <person name="Koide Y."/>
            <person name="Komori T."/>
            <person name="Koyama Y."/>
            <person name="Minetoki T."/>
            <person name="Suharnan S."/>
            <person name="Tanaka A."/>
            <person name="Isono K."/>
            <person name="Kuhara S."/>
            <person name="Ogasawara N."/>
            <person name="Kikuchi H."/>
        </authorList>
    </citation>
    <scope>NUCLEOTIDE SEQUENCE [LARGE SCALE GENOMIC DNA]</scope>
    <source>
        <strain>ATCC 42149 / RIB 40</strain>
    </source>
</reference>
<protein>
    <recommendedName>
        <fullName>Protein pxr1</fullName>
    </recommendedName>
    <alternativeName>
        <fullName>PinX1-related protein 1</fullName>
    </alternativeName>
</protein>
<gene>
    <name type="primary">pxr1</name>
    <name type="ORF">AO090673000008</name>
</gene>
<proteinExistence type="inferred from homology"/>
<accession>Q2UDW7</accession>
<sequence length="306" mass="33896">MGLAAPRKRTKISHDPNNTNWSRSTSGYGHKIMSSQGWTPGSFLGARNAAHADMFTAASASHIRVVVKDDTLGLGARSKRDPLDEPTGLDAFKGLLGRLNGKSDADLEAEQKKHEDAKIARYAATKWHTVTFISGGLLAQEKLVSLSAQKESPGAQHGSHQNRGGLDMQKSEEDANTSIKDNTLKALREEQVSSVPIAEDTSRSKSKRHRKDEQGKKDKKERKTKKRKHMDEPSPIDSDIPERAILETDLQATVTDSRDTTPPVAKVLSKERRPMGRHLLRGRHIAQKKKALMDDRSLNEIFMVKS</sequence>
<feature type="chain" id="PRO_0000324881" description="Protein pxr1">
    <location>
        <begin position="1"/>
        <end position="306"/>
    </location>
</feature>
<feature type="domain" description="G-patch" evidence="2">
    <location>
        <begin position="25"/>
        <end position="79"/>
    </location>
</feature>
<feature type="region of interest" description="Disordered" evidence="3">
    <location>
        <begin position="1"/>
        <end position="27"/>
    </location>
</feature>
<feature type="region of interest" description="Disordered" evidence="3">
    <location>
        <begin position="148"/>
        <end position="241"/>
    </location>
</feature>
<feature type="compositionally biased region" description="Basic residues" evidence="3">
    <location>
        <begin position="1"/>
        <end position="11"/>
    </location>
</feature>
<feature type="compositionally biased region" description="Polar residues" evidence="3">
    <location>
        <begin position="15"/>
        <end position="27"/>
    </location>
</feature>
<feature type="compositionally biased region" description="Basic and acidic residues" evidence="3">
    <location>
        <begin position="182"/>
        <end position="191"/>
    </location>
</feature>
<feature type="compositionally biased region" description="Basic residues" evidence="3">
    <location>
        <begin position="219"/>
        <end position="228"/>
    </location>
</feature>
<organism>
    <name type="scientific">Aspergillus oryzae (strain ATCC 42149 / RIB 40)</name>
    <name type="common">Yellow koji mold</name>
    <dbReference type="NCBI Taxonomy" id="510516"/>
    <lineage>
        <taxon>Eukaryota</taxon>
        <taxon>Fungi</taxon>
        <taxon>Dikarya</taxon>
        <taxon>Ascomycota</taxon>
        <taxon>Pezizomycotina</taxon>
        <taxon>Eurotiomycetes</taxon>
        <taxon>Eurotiomycetidae</taxon>
        <taxon>Eurotiales</taxon>
        <taxon>Aspergillaceae</taxon>
        <taxon>Aspergillus</taxon>
        <taxon>Aspergillus subgen. Circumdati</taxon>
    </lineage>
</organism>